<keyword id="KW-0963">Cytoplasm</keyword>
<keyword id="KW-0671">Queuosine biosynthesis</keyword>
<keyword id="KW-0949">S-adenosyl-L-methionine</keyword>
<keyword id="KW-0808">Transferase</keyword>
<reference key="1">
    <citation type="journal article" date="2009" name="PLoS Genet.">
        <title>Organised genome dynamics in the Escherichia coli species results in highly diverse adaptive paths.</title>
        <authorList>
            <person name="Touchon M."/>
            <person name="Hoede C."/>
            <person name="Tenaillon O."/>
            <person name="Barbe V."/>
            <person name="Baeriswyl S."/>
            <person name="Bidet P."/>
            <person name="Bingen E."/>
            <person name="Bonacorsi S."/>
            <person name="Bouchier C."/>
            <person name="Bouvet O."/>
            <person name="Calteau A."/>
            <person name="Chiapello H."/>
            <person name="Clermont O."/>
            <person name="Cruveiller S."/>
            <person name="Danchin A."/>
            <person name="Diard M."/>
            <person name="Dossat C."/>
            <person name="Karoui M.E."/>
            <person name="Frapy E."/>
            <person name="Garry L."/>
            <person name="Ghigo J.M."/>
            <person name="Gilles A.M."/>
            <person name="Johnson J."/>
            <person name="Le Bouguenec C."/>
            <person name="Lescat M."/>
            <person name="Mangenot S."/>
            <person name="Martinez-Jehanne V."/>
            <person name="Matic I."/>
            <person name="Nassif X."/>
            <person name="Oztas S."/>
            <person name="Petit M.A."/>
            <person name="Pichon C."/>
            <person name="Rouy Z."/>
            <person name="Ruf C.S."/>
            <person name="Schneider D."/>
            <person name="Tourret J."/>
            <person name="Vacherie B."/>
            <person name="Vallenet D."/>
            <person name="Medigue C."/>
            <person name="Rocha E.P.C."/>
            <person name="Denamur E."/>
        </authorList>
    </citation>
    <scope>NUCLEOTIDE SEQUENCE [LARGE SCALE GENOMIC DNA]</scope>
    <source>
        <strain>ATCC 35469 / DSM 13698 / BCRC 15582 / CCUG 18766 / IAM 14443 / JCM 21226 / LMG 7866 / NBRC 102419 / NCTC 12128 / CDC 0568-73</strain>
    </source>
</reference>
<sequence length="356" mass="39447">MRVTDFSFELPESLIAHYPMPERSSCRLLSLDGPTGALTHGTFTDLLDKLNPGDLLVFNNTRVIPARLFGRKASGGKIEVLVERMLDDKRILAHIRASKAPKPGAELLLGDDESINATMTARHGALFEVEFNDDRSVLDILNSIGHMPLPPYIDRPDEDADRELYQTVYSEKPGAVAAPTAGLHFDEPLLEKLRAKGVEMAFVTLHVGAGTFQPVRVDTIEDHIMHSEYAEVPQDVVDAVLATKARGNRVIAVGTTSVRSLESAAQAAKNDLIEPFFDDTQIFIYPGFQYKVVDALVTNFHLPESTLIMLVSAFAGYQHTMNAYKAAVEEKYRFFSYGDAMFITYNPQAINERVGE</sequence>
<accession>B7LMI2</accession>
<name>QUEA_ESCF3</name>
<proteinExistence type="inferred from homology"/>
<organism>
    <name type="scientific">Escherichia fergusonii (strain ATCC 35469 / DSM 13698 / CCUG 18766 / IAM 14443 / JCM 21226 / LMG 7866 / NBRC 102419 / NCTC 12128 / CDC 0568-73)</name>
    <dbReference type="NCBI Taxonomy" id="585054"/>
    <lineage>
        <taxon>Bacteria</taxon>
        <taxon>Pseudomonadati</taxon>
        <taxon>Pseudomonadota</taxon>
        <taxon>Gammaproteobacteria</taxon>
        <taxon>Enterobacterales</taxon>
        <taxon>Enterobacteriaceae</taxon>
        <taxon>Escherichia</taxon>
    </lineage>
</organism>
<comment type="function">
    <text evidence="1">Transfers and isomerizes the ribose moiety from AdoMet to the 7-aminomethyl group of 7-deazaguanine (preQ1-tRNA) to give epoxyqueuosine (oQ-tRNA).</text>
</comment>
<comment type="catalytic activity">
    <reaction evidence="1">
        <text>7-aminomethyl-7-carbaguanosine(34) in tRNA + S-adenosyl-L-methionine = epoxyqueuosine(34) in tRNA + adenine + L-methionine + 2 H(+)</text>
        <dbReference type="Rhea" id="RHEA:32155"/>
        <dbReference type="Rhea" id="RHEA-COMP:10342"/>
        <dbReference type="Rhea" id="RHEA-COMP:18582"/>
        <dbReference type="ChEBI" id="CHEBI:15378"/>
        <dbReference type="ChEBI" id="CHEBI:16708"/>
        <dbReference type="ChEBI" id="CHEBI:57844"/>
        <dbReference type="ChEBI" id="CHEBI:59789"/>
        <dbReference type="ChEBI" id="CHEBI:82833"/>
        <dbReference type="ChEBI" id="CHEBI:194443"/>
        <dbReference type="EC" id="2.4.99.17"/>
    </reaction>
</comment>
<comment type="pathway">
    <text evidence="1">tRNA modification; tRNA-queuosine biosynthesis.</text>
</comment>
<comment type="subunit">
    <text evidence="1">Monomer.</text>
</comment>
<comment type="subcellular location">
    <subcellularLocation>
        <location evidence="1">Cytoplasm</location>
    </subcellularLocation>
</comment>
<comment type="similarity">
    <text evidence="1">Belongs to the QueA family.</text>
</comment>
<protein>
    <recommendedName>
        <fullName evidence="1">S-adenosylmethionine:tRNA ribosyltransferase-isomerase</fullName>
        <ecNumber evidence="1">2.4.99.17</ecNumber>
    </recommendedName>
    <alternativeName>
        <fullName evidence="1">Queuosine biosynthesis protein QueA</fullName>
    </alternativeName>
</protein>
<dbReference type="EC" id="2.4.99.17" evidence="1"/>
<dbReference type="EMBL" id="CU928158">
    <property type="protein sequence ID" value="CAQ90115.1"/>
    <property type="molecule type" value="Genomic_DNA"/>
</dbReference>
<dbReference type="RefSeq" id="WP_001266495.1">
    <property type="nucleotide sequence ID" value="NC_011740.1"/>
</dbReference>
<dbReference type="SMR" id="B7LMI2"/>
<dbReference type="GeneID" id="75056349"/>
<dbReference type="KEGG" id="efe:EFER_2620"/>
<dbReference type="HOGENOM" id="CLU_039110_1_0_6"/>
<dbReference type="OrthoDB" id="9805933at2"/>
<dbReference type="UniPathway" id="UPA00392"/>
<dbReference type="Proteomes" id="UP000000745">
    <property type="component" value="Chromosome"/>
</dbReference>
<dbReference type="GO" id="GO:0005737">
    <property type="term" value="C:cytoplasm"/>
    <property type="evidence" value="ECO:0007669"/>
    <property type="project" value="UniProtKB-SubCell"/>
</dbReference>
<dbReference type="GO" id="GO:0051075">
    <property type="term" value="F:S-adenosylmethionine:tRNA ribosyltransferase-isomerase activity"/>
    <property type="evidence" value="ECO:0007669"/>
    <property type="project" value="UniProtKB-EC"/>
</dbReference>
<dbReference type="GO" id="GO:0008616">
    <property type="term" value="P:queuosine biosynthetic process"/>
    <property type="evidence" value="ECO:0007669"/>
    <property type="project" value="UniProtKB-UniRule"/>
</dbReference>
<dbReference type="GO" id="GO:0002099">
    <property type="term" value="P:tRNA wobble guanine modification"/>
    <property type="evidence" value="ECO:0007669"/>
    <property type="project" value="TreeGrafter"/>
</dbReference>
<dbReference type="FunFam" id="2.40.10.240:FF:000001">
    <property type="entry name" value="S-adenosylmethionine:tRNA ribosyltransferase-isomerase"/>
    <property type="match status" value="1"/>
</dbReference>
<dbReference type="FunFam" id="3.40.1780.10:FF:000001">
    <property type="entry name" value="S-adenosylmethionine:tRNA ribosyltransferase-isomerase"/>
    <property type="match status" value="1"/>
</dbReference>
<dbReference type="Gene3D" id="2.40.10.240">
    <property type="entry name" value="QueA-like"/>
    <property type="match status" value="1"/>
</dbReference>
<dbReference type="Gene3D" id="3.40.1780.10">
    <property type="entry name" value="QueA-like"/>
    <property type="match status" value="1"/>
</dbReference>
<dbReference type="HAMAP" id="MF_00113">
    <property type="entry name" value="QueA"/>
    <property type="match status" value="1"/>
</dbReference>
<dbReference type="InterPro" id="IPR003699">
    <property type="entry name" value="QueA"/>
</dbReference>
<dbReference type="InterPro" id="IPR042118">
    <property type="entry name" value="QueA_dom1"/>
</dbReference>
<dbReference type="InterPro" id="IPR042119">
    <property type="entry name" value="QueA_dom2"/>
</dbReference>
<dbReference type="InterPro" id="IPR036100">
    <property type="entry name" value="QueA_sf"/>
</dbReference>
<dbReference type="NCBIfam" id="NF001140">
    <property type="entry name" value="PRK00147.1"/>
    <property type="match status" value="1"/>
</dbReference>
<dbReference type="NCBIfam" id="TIGR00113">
    <property type="entry name" value="queA"/>
    <property type="match status" value="1"/>
</dbReference>
<dbReference type="PANTHER" id="PTHR30307">
    <property type="entry name" value="S-ADENOSYLMETHIONINE:TRNA RIBOSYLTRANSFERASE-ISOMERASE"/>
    <property type="match status" value="1"/>
</dbReference>
<dbReference type="PANTHER" id="PTHR30307:SF0">
    <property type="entry name" value="S-ADENOSYLMETHIONINE:TRNA RIBOSYLTRANSFERASE-ISOMERASE"/>
    <property type="match status" value="1"/>
</dbReference>
<dbReference type="Pfam" id="PF02547">
    <property type="entry name" value="Queuosine_synth"/>
    <property type="match status" value="1"/>
</dbReference>
<dbReference type="SUPFAM" id="SSF111337">
    <property type="entry name" value="QueA-like"/>
    <property type="match status" value="1"/>
</dbReference>
<feature type="chain" id="PRO_1000117534" description="S-adenosylmethionine:tRNA ribosyltransferase-isomerase">
    <location>
        <begin position="1"/>
        <end position="356"/>
    </location>
</feature>
<evidence type="ECO:0000255" key="1">
    <source>
        <dbReference type="HAMAP-Rule" id="MF_00113"/>
    </source>
</evidence>
<gene>
    <name evidence="1" type="primary">queA</name>
    <name type="ordered locus">EFER_2620</name>
</gene>